<feature type="chain" id="PRO_1000090308" description="Holliday junction branch migration complex subunit RuvA">
    <location>
        <begin position="1"/>
        <end position="200"/>
    </location>
</feature>
<feature type="region of interest" description="Domain I" evidence="1">
    <location>
        <begin position="1"/>
        <end position="64"/>
    </location>
</feature>
<feature type="region of interest" description="Domain II" evidence="1">
    <location>
        <begin position="65"/>
        <end position="143"/>
    </location>
</feature>
<feature type="region of interest" description="Flexible linker" evidence="1">
    <location>
        <begin position="144"/>
        <end position="148"/>
    </location>
</feature>
<feature type="region of interest" description="Domain III" evidence="1">
    <location>
        <begin position="149"/>
        <end position="200"/>
    </location>
</feature>
<dbReference type="EMBL" id="CP001019">
    <property type="protein sequence ID" value="ACJ17871.1"/>
    <property type="molecule type" value="Genomic_DNA"/>
</dbReference>
<dbReference type="RefSeq" id="WP_012569764.1">
    <property type="nucleotide sequence ID" value="NC_011527.1"/>
</dbReference>
<dbReference type="SMR" id="B6IYU3"/>
<dbReference type="KEGG" id="cbg:CbuG_0444"/>
<dbReference type="HOGENOM" id="CLU_087936_0_0_6"/>
<dbReference type="GO" id="GO:0005737">
    <property type="term" value="C:cytoplasm"/>
    <property type="evidence" value="ECO:0007669"/>
    <property type="project" value="UniProtKB-SubCell"/>
</dbReference>
<dbReference type="GO" id="GO:0009379">
    <property type="term" value="C:Holliday junction helicase complex"/>
    <property type="evidence" value="ECO:0007669"/>
    <property type="project" value="InterPro"/>
</dbReference>
<dbReference type="GO" id="GO:0048476">
    <property type="term" value="C:Holliday junction resolvase complex"/>
    <property type="evidence" value="ECO:0007669"/>
    <property type="project" value="UniProtKB-UniRule"/>
</dbReference>
<dbReference type="GO" id="GO:0005524">
    <property type="term" value="F:ATP binding"/>
    <property type="evidence" value="ECO:0007669"/>
    <property type="project" value="InterPro"/>
</dbReference>
<dbReference type="GO" id="GO:0000400">
    <property type="term" value="F:four-way junction DNA binding"/>
    <property type="evidence" value="ECO:0007669"/>
    <property type="project" value="UniProtKB-UniRule"/>
</dbReference>
<dbReference type="GO" id="GO:0009378">
    <property type="term" value="F:four-way junction helicase activity"/>
    <property type="evidence" value="ECO:0007669"/>
    <property type="project" value="InterPro"/>
</dbReference>
<dbReference type="GO" id="GO:0006310">
    <property type="term" value="P:DNA recombination"/>
    <property type="evidence" value="ECO:0007669"/>
    <property type="project" value="UniProtKB-UniRule"/>
</dbReference>
<dbReference type="GO" id="GO:0006281">
    <property type="term" value="P:DNA repair"/>
    <property type="evidence" value="ECO:0007669"/>
    <property type="project" value="UniProtKB-UniRule"/>
</dbReference>
<dbReference type="CDD" id="cd14332">
    <property type="entry name" value="UBA_RuvA_C"/>
    <property type="match status" value="1"/>
</dbReference>
<dbReference type="Gene3D" id="1.10.150.20">
    <property type="entry name" value="5' to 3' exonuclease, C-terminal subdomain"/>
    <property type="match status" value="1"/>
</dbReference>
<dbReference type="Gene3D" id="1.10.8.10">
    <property type="entry name" value="DNA helicase RuvA subunit, C-terminal domain"/>
    <property type="match status" value="1"/>
</dbReference>
<dbReference type="Gene3D" id="2.40.50.140">
    <property type="entry name" value="Nucleic acid-binding proteins"/>
    <property type="match status" value="1"/>
</dbReference>
<dbReference type="HAMAP" id="MF_00031">
    <property type="entry name" value="DNA_HJ_migration_RuvA"/>
    <property type="match status" value="1"/>
</dbReference>
<dbReference type="InterPro" id="IPR013849">
    <property type="entry name" value="DNA_helicase_Holl-junc_RuvA_I"/>
</dbReference>
<dbReference type="InterPro" id="IPR003583">
    <property type="entry name" value="Hlx-hairpin-Hlx_DNA-bd_motif"/>
</dbReference>
<dbReference type="InterPro" id="IPR012340">
    <property type="entry name" value="NA-bd_OB-fold"/>
</dbReference>
<dbReference type="InterPro" id="IPR000085">
    <property type="entry name" value="RuvA"/>
</dbReference>
<dbReference type="InterPro" id="IPR010994">
    <property type="entry name" value="RuvA_2-like"/>
</dbReference>
<dbReference type="InterPro" id="IPR011114">
    <property type="entry name" value="RuvA_C"/>
</dbReference>
<dbReference type="InterPro" id="IPR036267">
    <property type="entry name" value="RuvA_C_sf"/>
</dbReference>
<dbReference type="NCBIfam" id="TIGR00084">
    <property type="entry name" value="ruvA"/>
    <property type="match status" value="1"/>
</dbReference>
<dbReference type="Pfam" id="PF14520">
    <property type="entry name" value="HHH_5"/>
    <property type="match status" value="1"/>
</dbReference>
<dbReference type="Pfam" id="PF07499">
    <property type="entry name" value="RuvA_C"/>
    <property type="match status" value="1"/>
</dbReference>
<dbReference type="Pfam" id="PF01330">
    <property type="entry name" value="RuvA_N"/>
    <property type="match status" value="1"/>
</dbReference>
<dbReference type="SMART" id="SM00278">
    <property type="entry name" value="HhH1"/>
    <property type="match status" value="2"/>
</dbReference>
<dbReference type="SUPFAM" id="SSF46929">
    <property type="entry name" value="DNA helicase RuvA subunit, C-terminal domain"/>
    <property type="match status" value="1"/>
</dbReference>
<dbReference type="SUPFAM" id="SSF50249">
    <property type="entry name" value="Nucleic acid-binding proteins"/>
    <property type="match status" value="1"/>
</dbReference>
<dbReference type="SUPFAM" id="SSF47781">
    <property type="entry name" value="RuvA domain 2-like"/>
    <property type="match status" value="1"/>
</dbReference>
<proteinExistence type="inferred from homology"/>
<gene>
    <name evidence="1" type="primary">ruvA</name>
    <name type="ordered locus">CbuG_0444</name>
</gene>
<keyword id="KW-0963">Cytoplasm</keyword>
<keyword id="KW-0227">DNA damage</keyword>
<keyword id="KW-0233">DNA recombination</keyword>
<keyword id="KW-0234">DNA repair</keyword>
<keyword id="KW-0238">DNA-binding</keyword>
<name>RUVA_COXB2</name>
<comment type="function">
    <text evidence="1">The RuvA-RuvB-RuvC complex processes Holliday junction (HJ) DNA during genetic recombination and DNA repair, while the RuvA-RuvB complex plays an important role in the rescue of blocked DNA replication forks via replication fork reversal (RFR). RuvA specifically binds to HJ cruciform DNA, conferring on it an open structure. The RuvB hexamer acts as an ATP-dependent pump, pulling dsDNA into and through the RuvAB complex. HJ branch migration allows RuvC to scan DNA until it finds its consensus sequence, where it cleaves and resolves the cruciform DNA.</text>
</comment>
<comment type="subunit">
    <text evidence="1">Homotetramer. Forms an RuvA(8)-RuvB(12)-Holliday junction (HJ) complex. HJ DNA is sandwiched between 2 RuvA tetramers; dsDNA enters through RuvA and exits via RuvB. An RuvB hexamer assembles on each DNA strand where it exits the tetramer. Each RuvB hexamer is contacted by two RuvA subunits (via domain III) on 2 adjacent RuvB subunits; this complex drives branch migration. In the full resolvosome a probable DNA-RuvA(4)-RuvB(12)-RuvC(2) complex forms which resolves the HJ.</text>
</comment>
<comment type="subcellular location">
    <subcellularLocation>
        <location evidence="1">Cytoplasm</location>
    </subcellularLocation>
</comment>
<comment type="domain">
    <text evidence="1">Has three domains with a flexible linker between the domains II and III and assumes an 'L' shape. Domain III is highly mobile and contacts RuvB.</text>
</comment>
<comment type="similarity">
    <text evidence="1">Belongs to the RuvA family.</text>
</comment>
<reference key="1">
    <citation type="journal article" date="2009" name="Infect. Immun.">
        <title>Comparative genomics reveal extensive transposon-mediated genomic plasticity and diversity among potential effector proteins within the genus Coxiella.</title>
        <authorList>
            <person name="Beare P.A."/>
            <person name="Unsworth N."/>
            <person name="Andoh M."/>
            <person name="Voth D.E."/>
            <person name="Omsland A."/>
            <person name="Gilk S.D."/>
            <person name="Williams K.P."/>
            <person name="Sobral B.W."/>
            <person name="Kupko J.J. III"/>
            <person name="Porcella S.F."/>
            <person name="Samuel J.E."/>
            <person name="Heinzen R.A."/>
        </authorList>
    </citation>
    <scope>NUCLEOTIDE SEQUENCE [LARGE SCALE GENOMIC DNA]</scope>
    <source>
        <strain>CbuG_Q212</strain>
    </source>
</reference>
<evidence type="ECO:0000255" key="1">
    <source>
        <dbReference type="HAMAP-Rule" id="MF_00031"/>
    </source>
</evidence>
<organism>
    <name type="scientific">Coxiella burnetii (strain CbuG_Q212)</name>
    <name type="common">Coxiella burnetii (strain Q212)</name>
    <dbReference type="NCBI Taxonomy" id="434923"/>
    <lineage>
        <taxon>Bacteria</taxon>
        <taxon>Pseudomonadati</taxon>
        <taxon>Pseudomonadota</taxon>
        <taxon>Gammaproteobacteria</taxon>
        <taxon>Legionellales</taxon>
        <taxon>Coxiellaceae</taxon>
        <taxon>Coxiella</taxon>
    </lineage>
</organism>
<accession>B6IYU3</accession>
<protein>
    <recommendedName>
        <fullName evidence="1">Holliday junction branch migration complex subunit RuvA</fullName>
    </recommendedName>
</protein>
<sequence length="200" mass="22324">MIGHLRGIIVEKQPPYLLLEVAGVGYEITAPLSTFYHLPEPQEEILLYTHLIVREDAHTLYGFHNDHERRLFRALIKVNGVGPKLALAILSGIGPDEFVHCVLNQNIDQLVRIPGVGRKTAERLVIETKDRLSRWHTNDTPSPEGLRSSNTQPTQDAISALMALGYKPQEAKRAIDAIQKPDLSAETLIRLALKQMVLGT</sequence>